<dbReference type="EMBL" id="CP000873">
    <property type="protein sequence ID" value="ABX63979.1"/>
    <property type="molecule type" value="Genomic_DNA"/>
</dbReference>
<dbReference type="SMR" id="A9MC92"/>
<dbReference type="KEGG" id="bcs:BCAN_B0819"/>
<dbReference type="HOGENOM" id="CLU_113319_1_4_5"/>
<dbReference type="PhylomeDB" id="A9MC92"/>
<dbReference type="Proteomes" id="UP000001385">
    <property type="component" value="Chromosome II"/>
</dbReference>
<dbReference type="GO" id="GO:0003677">
    <property type="term" value="F:DNA binding"/>
    <property type="evidence" value="ECO:0007669"/>
    <property type="project" value="UniProtKB-KW"/>
</dbReference>
<dbReference type="GO" id="GO:0003700">
    <property type="term" value="F:DNA-binding transcription factor activity"/>
    <property type="evidence" value="ECO:0007669"/>
    <property type="project" value="UniProtKB-UniRule"/>
</dbReference>
<dbReference type="GO" id="GO:0016151">
    <property type="term" value="F:nickel cation binding"/>
    <property type="evidence" value="ECO:0007669"/>
    <property type="project" value="UniProtKB-UniRule"/>
</dbReference>
<dbReference type="GO" id="GO:0010045">
    <property type="term" value="P:response to nickel cation"/>
    <property type="evidence" value="ECO:0007669"/>
    <property type="project" value="InterPro"/>
</dbReference>
<dbReference type="CDD" id="cd22231">
    <property type="entry name" value="RHH_NikR_HicB-like"/>
    <property type="match status" value="1"/>
</dbReference>
<dbReference type="Gene3D" id="3.30.70.1150">
    <property type="entry name" value="ACT-like. Chain A, domain 2"/>
    <property type="match status" value="1"/>
</dbReference>
<dbReference type="Gene3D" id="1.10.1220.10">
    <property type="entry name" value="Met repressor-like"/>
    <property type="match status" value="1"/>
</dbReference>
<dbReference type="HAMAP" id="MF_00476">
    <property type="entry name" value="NikR"/>
    <property type="match status" value="1"/>
</dbReference>
<dbReference type="InterPro" id="IPR027271">
    <property type="entry name" value="Acetolactate_synth/TF_NikR_C"/>
</dbReference>
<dbReference type="InterPro" id="IPR045865">
    <property type="entry name" value="ACT-like_dom_sf"/>
</dbReference>
<dbReference type="InterPro" id="IPR013321">
    <property type="entry name" value="Arc_rbn_hlx_hlx"/>
</dbReference>
<dbReference type="InterPro" id="IPR002145">
    <property type="entry name" value="CopG"/>
</dbReference>
<dbReference type="InterPro" id="IPR050192">
    <property type="entry name" value="CopG/NikR_regulator"/>
</dbReference>
<dbReference type="InterPro" id="IPR022988">
    <property type="entry name" value="Ni_resp_reg_NikR"/>
</dbReference>
<dbReference type="InterPro" id="IPR014160">
    <property type="entry name" value="Nickel_NikR_proteobac"/>
</dbReference>
<dbReference type="InterPro" id="IPR010985">
    <property type="entry name" value="Ribbon_hlx_hlx"/>
</dbReference>
<dbReference type="InterPro" id="IPR014864">
    <property type="entry name" value="TF_NikR_Ni-bd_C"/>
</dbReference>
<dbReference type="NCBIfam" id="TIGR02793">
    <property type="entry name" value="nikR"/>
    <property type="match status" value="1"/>
</dbReference>
<dbReference type="NCBIfam" id="NF002815">
    <property type="entry name" value="PRK02967.1"/>
    <property type="match status" value="1"/>
</dbReference>
<dbReference type="NCBIfam" id="NF003381">
    <property type="entry name" value="PRK04460.1"/>
    <property type="match status" value="1"/>
</dbReference>
<dbReference type="PANTHER" id="PTHR34719">
    <property type="entry name" value="NICKEL-RESPONSIVE REGULATOR"/>
    <property type="match status" value="1"/>
</dbReference>
<dbReference type="PANTHER" id="PTHR34719:SF2">
    <property type="entry name" value="NICKEL-RESPONSIVE REGULATOR"/>
    <property type="match status" value="1"/>
</dbReference>
<dbReference type="Pfam" id="PF08753">
    <property type="entry name" value="NikR_C"/>
    <property type="match status" value="1"/>
</dbReference>
<dbReference type="Pfam" id="PF01402">
    <property type="entry name" value="RHH_1"/>
    <property type="match status" value="1"/>
</dbReference>
<dbReference type="SUPFAM" id="SSF55021">
    <property type="entry name" value="ACT-like"/>
    <property type="match status" value="1"/>
</dbReference>
<dbReference type="SUPFAM" id="SSF47598">
    <property type="entry name" value="Ribbon-helix-helix"/>
    <property type="match status" value="1"/>
</dbReference>
<protein>
    <recommendedName>
        <fullName evidence="1">Putative nickel-responsive regulator</fullName>
    </recommendedName>
</protein>
<comment type="function">
    <text evidence="1">Transcriptional regulator.</text>
</comment>
<comment type="cofactor">
    <cofactor evidence="1">
        <name>Ni(2+)</name>
        <dbReference type="ChEBI" id="CHEBI:49786"/>
    </cofactor>
    <text evidence="1">Binds 1 nickel ion per subunit.</text>
</comment>
<comment type="similarity">
    <text evidence="1">Belongs to the transcriptional regulatory CopG/NikR family.</text>
</comment>
<gene>
    <name type="ordered locus">BCAN_B0819</name>
</gene>
<accession>A9MC92</accession>
<proteinExistence type="inferred from homology"/>
<feature type="chain" id="PRO_1000081257" description="Putative nickel-responsive regulator">
    <location>
        <begin position="1"/>
        <end position="132"/>
    </location>
</feature>
<feature type="binding site" evidence="1">
    <location>
        <position position="77"/>
    </location>
    <ligand>
        <name>Ni(2+)</name>
        <dbReference type="ChEBI" id="CHEBI:49786"/>
    </ligand>
</feature>
<feature type="binding site" evidence="1">
    <location>
        <position position="88"/>
    </location>
    <ligand>
        <name>Ni(2+)</name>
        <dbReference type="ChEBI" id="CHEBI:49786"/>
    </ligand>
</feature>
<feature type="binding site" evidence="1">
    <location>
        <position position="90"/>
    </location>
    <ligand>
        <name>Ni(2+)</name>
        <dbReference type="ChEBI" id="CHEBI:49786"/>
    </ligand>
</feature>
<feature type="binding site" evidence="1">
    <location>
        <position position="96"/>
    </location>
    <ligand>
        <name>Ni(2+)</name>
        <dbReference type="ChEBI" id="CHEBI:49786"/>
    </ligand>
</feature>
<organism>
    <name type="scientific">Brucella canis (strain ATCC 23365 / NCTC 10854 / RM-666)</name>
    <dbReference type="NCBI Taxonomy" id="483179"/>
    <lineage>
        <taxon>Bacteria</taxon>
        <taxon>Pseudomonadati</taxon>
        <taxon>Pseudomonadota</taxon>
        <taxon>Alphaproteobacteria</taxon>
        <taxon>Hyphomicrobiales</taxon>
        <taxon>Brucellaceae</taxon>
        <taxon>Brucella/Ochrobactrum group</taxon>
        <taxon>Brucella</taxon>
    </lineage>
</organism>
<sequence length="132" mass="14930">MQRITITIDDDLMAALDRMIEIKGYQNRSEALRDLARTGLQQASLEEGQMEACVGVLSYTYDHSARDLSKKLTNTHHDHHNISVASMHVHLDHDRCLEVSILKGKTDDVRHFADHVKAERHVTHGTLAVLPL</sequence>
<evidence type="ECO:0000255" key="1">
    <source>
        <dbReference type="HAMAP-Rule" id="MF_00476"/>
    </source>
</evidence>
<keyword id="KW-0238">DNA-binding</keyword>
<keyword id="KW-0479">Metal-binding</keyword>
<keyword id="KW-0533">Nickel</keyword>
<keyword id="KW-1185">Reference proteome</keyword>
<keyword id="KW-0804">Transcription</keyword>
<keyword id="KW-0805">Transcription regulation</keyword>
<reference key="1">
    <citation type="submission" date="2007-10" db="EMBL/GenBank/DDBJ databases">
        <title>Brucella canis ATCC 23365 whole genome shotgun sequencing project.</title>
        <authorList>
            <person name="Setubal J.C."/>
            <person name="Bowns C."/>
            <person name="Boyle S."/>
            <person name="Crasta O.R."/>
            <person name="Czar M.J."/>
            <person name="Dharmanolla C."/>
            <person name="Gillespie J.J."/>
            <person name="Kenyon R.W."/>
            <person name="Lu J."/>
            <person name="Mane S."/>
            <person name="Mohapatra S."/>
            <person name="Nagrani S."/>
            <person name="Purkayastha A."/>
            <person name="Rajasimha H.K."/>
            <person name="Shallom J.M."/>
            <person name="Shallom S."/>
            <person name="Shukla M."/>
            <person name="Snyder E.E."/>
            <person name="Sobral B.W."/>
            <person name="Wattam A.R."/>
            <person name="Will R."/>
            <person name="Williams K."/>
            <person name="Yoo H."/>
            <person name="Bruce D."/>
            <person name="Detter C."/>
            <person name="Munk C."/>
            <person name="Brettin T.S."/>
        </authorList>
    </citation>
    <scope>NUCLEOTIDE SEQUENCE [LARGE SCALE GENOMIC DNA]</scope>
    <source>
        <strain>ATCC 23365 / NCTC 10854 / RM-666</strain>
    </source>
</reference>
<name>NIKR_BRUC2</name>